<accession>O68669</accession>
<dbReference type="EMBL" id="AF053765">
    <property type="protein sequence ID" value="AAC38408.1"/>
    <property type="molecule type" value="Genomic_DNA"/>
</dbReference>
<dbReference type="RefSeq" id="WP_013057989.1">
    <property type="nucleotide sequence ID" value="NZ_WWFB01000004.1"/>
</dbReference>
<dbReference type="SMR" id="O68669"/>
<dbReference type="OMA" id="ELIHIRI"/>
<dbReference type="GO" id="GO:0031411">
    <property type="term" value="C:gas vesicle"/>
    <property type="evidence" value="ECO:0007669"/>
    <property type="project" value="UniProtKB-SubCell"/>
</dbReference>
<dbReference type="GO" id="GO:0012506">
    <property type="term" value="C:vesicle membrane"/>
    <property type="evidence" value="ECO:0007669"/>
    <property type="project" value="InterPro"/>
</dbReference>
<dbReference type="GO" id="GO:0005198">
    <property type="term" value="F:structural molecule activity"/>
    <property type="evidence" value="ECO:0007669"/>
    <property type="project" value="InterPro"/>
</dbReference>
<dbReference type="InterPro" id="IPR000638">
    <property type="entry name" value="Gas-vesicle_GvpA-like"/>
</dbReference>
<dbReference type="InterPro" id="IPR050530">
    <property type="entry name" value="GvpA"/>
</dbReference>
<dbReference type="InterPro" id="IPR018493">
    <property type="entry name" value="GvpA-like_CS"/>
</dbReference>
<dbReference type="PANTHER" id="PTHR35344:SF4">
    <property type="entry name" value="GAS VESICLE PROTEIN A1"/>
    <property type="match status" value="1"/>
</dbReference>
<dbReference type="PANTHER" id="PTHR35344">
    <property type="entry name" value="GAS VESICLE STRUCTURAL PROTEIN 2-RELATED"/>
    <property type="match status" value="1"/>
</dbReference>
<dbReference type="Pfam" id="PF00741">
    <property type="entry name" value="Gas_vesicle"/>
    <property type="match status" value="1"/>
</dbReference>
<dbReference type="PROSITE" id="PS00234">
    <property type="entry name" value="GAS_VESICLE_A_1"/>
    <property type="match status" value="1"/>
</dbReference>
<dbReference type="PROSITE" id="PS00669">
    <property type="entry name" value="GAS_VESICLE_A_2"/>
    <property type="match status" value="1"/>
</dbReference>
<keyword id="KW-0304">Gas vesicle</keyword>
<gene>
    <name evidence="6" type="primary">gvpJ</name>
</gene>
<comment type="function">
    <text evidence="1 2 8">A minor component of the gas vesicle, might be involved in nucleating gas vesicle formation (By similarity). This protein could be important for the shape determination of the gas vesicle (Probable). Gas vesicles (GV) are hollow, gas filled proteinaceous nanostructures. During planktonic growth they allow positioning of the organism at a favorable depth for light or nutrient acquisition (By similarity).</text>
</comment>
<comment type="function">
    <text evidence="5">When a minimal gvp locus (gvpA2-gvpR-gvpN-gvpF-gvpG-gvpL-gvpS-gvpK-gvpJ-gvpT-gvpU, called pNL29) is expressed in E.coli gas vesicles are made.</text>
</comment>
<comment type="subunit">
    <text evidence="1">Interacts with GvpA.</text>
</comment>
<comment type="subcellular location">
    <subcellularLocation>
        <location evidence="8">Gas vesicle</location>
    </subcellularLocation>
</comment>
<comment type="biotechnology">
    <text evidence="3 4">The minimal pNL29 gvp locus overexpressed in E.coli can be filled with Xe and used as a contrast agent for ultrasound and magnetic resonance imaging (PubMed:30555168). Engineered gas vesicles (GV) can be used for noninvasive imaging in E.coli and mice. Heterologous GVs with 2 copies of gvpA plus gvpC from D.flosaquae and the gvpR-gvpU operon from this bacterium make GVs suitable for imaging of bacteria deep in mouse tissues (e.g. the gastrointestinal tract), or when expressed in tumor-homing bacteria, can be detected in tumors (PubMed:29300010).</text>
</comment>
<comment type="similarity">
    <text evidence="7">Belongs to the gas vesicle GvpA family.</text>
</comment>
<proteinExistence type="evidence at protein level"/>
<organism>
    <name type="scientific">Priestia megaterium</name>
    <name type="common">Bacillus megaterium</name>
    <dbReference type="NCBI Taxonomy" id="1404"/>
    <lineage>
        <taxon>Bacteria</taxon>
        <taxon>Bacillati</taxon>
        <taxon>Bacillota</taxon>
        <taxon>Bacilli</taxon>
        <taxon>Bacillales</taxon>
        <taxon>Bacillaceae</taxon>
        <taxon>Priestia</taxon>
    </lineage>
</organism>
<name>GVPJ_PRIMG</name>
<feature type="chain" id="PRO_0000199998" description="Gas vesicle protein J">
    <location>
        <begin position="1"/>
        <end position="100"/>
    </location>
</feature>
<protein>
    <recommendedName>
        <fullName evidence="6">Gas vesicle protein J</fullName>
        <shortName>GvpJ</shortName>
    </recommendedName>
</protein>
<sequence>MAVEHNMQSSTIVDVLEKILDKGVVIAGDITVGIADVELLTIKIRLIVASVDKAKEIGMDWWENDPYLSSKGANNKALEEENKMLHERLKTLEEKIETKR</sequence>
<reference key="1">
    <citation type="journal article" date="1998" name="J. Bacteriol.">
        <title>Gas vesicle genes identified in Bacillus megaterium and functional expression in Escherichia coli.</title>
        <authorList>
            <person name="Li N."/>
            <person name="Cannon M.C."/>
        </authorList>
    </citation>
    <scope>NUCLEOTIDE SEQUENCE [GENOMIC DNA]</scope>
    <scope>FUNCTION</scope>
    <scope>EXPRESSION IN E.COLI</scope>
    <scope>PROBABLE SUBCELLULAR LOCATION</scope>
    <source>
        <strain>ATCC 35985 / VT1660</strain>
    </source>
</reference>
<reference key="2">
    <citation type="journal article" date="2018" name="AIChE J.">
        <title>Recombinantly Expressed Gas Vesicles as Nanoscale Contrast Agents for Ultrasound and Hyperpolarized MRI.</title>
        <authorList>
            <person name="Farhadi A."/>
            <person name="Ho G."/>
            <person name="Kunth M."/>
            <person name="Ling B."/>
            <person name="Lakshmanan A."/>
            <person name="Lu G."/>
            <person name="Bourdeau R.W."/>
            <person name="Schroeder L."/>
            <person name="Shapiro M.G."/>
        </authorList>
    </citation>
    <scope>BIOTECHNOLOGY</scope>
    <source>
        <strain>ATCC 35985 / VT1660</strain>
    </source>
</reference>
<reference key="3">
    <citation type="journal article" date="2018" name="Nature">
        <title>Acoustic reporter genes for noninvasive imaging of microorganisms in mammalian hosts.</title>
        <authorList>
            <person name="Bourdeau R.W."/>
            <person name="Lee-Gosselin A."/>
            <person name="Lakshmanan A."/>
            <person name="Farhadi A."/>
            <person name="Kumar S.R."/>
            <person name="Nety S.P."/>
            <person name="Shapiro M.G."/>
        </authorList>
    </citation>
    <scope>BIOTECHNOLOGY</scope>
</reference>
<evidence type="ECO:0000250" key="1">
    <source>
        <dbReference type="UniProtKB" id="P24374"/>
    </source>
</evidence>
<evidence type="ECO:0000250" key="2">
    <source>
        <dbReference type="UniProtKB" id="P55147"/>
    </source>
</evidence>
<evidence type="ECO:0000269" key="3">
    <source>
    </source>
</evidence>
<evidence type="ECO:0000269" key="4">
    <source>
    </source>
</evidence>
<evidence type="ECO:0000269" key="5">
    <source>
    </source>
</evidence>
<evidence type="ECO:0000303" key="6">
    <source>
    </source>
</evidence>
<evidence type="ECO:0000305" key="7"/>
<evidence type="ECO:0000305" key="8">
    <source>
    </source>
</evidence>